<gene>
    <name type="primary">cys-9</name>
    <name type="ORF">NCU08352</name>
</gene>
<accession>P51978</accession>
<accession>Q7RVM1</accession>
<evidence type="ECO:0000250" key="1">
    <source>
        <dbReference type="UniProtKB" id="P29509"/>
    </source>
</evidence>
<evidence type="ECO:0000305" key="2"/>
<feature type="chain" id="PRO_0000166764" description="Thioredoxin reductase">
    <location>
        <begin position="1"/>
        <end position="334"/>
    </location>
</feature>
<feature type="binding site" evidence="1">
    <location>
        <begin position="10"/>
        <end position="13"/>
    </location>
    <ligand>
        <name>FAD</name>
        <dbReference type="ChEBI" id="CHEBI:57692"/>
    </ligand>
</feature>
<feature type="binding site" evidence="1">
    <location>
        <begin position="39"/>
        <end position="40"/>
    </location>
    <ligand>
        <name>FAD</name>
        <dbReference type="ChEBI" id="CHEBI:57692"/>
    </ligand>
</feature>
<feature type="binding site" evidence="1">
    <location>
        <position position="44"/>
    </location>
    <ligand>
        <name>FAD</name>
        <dbReference type="ChEBI" id="CHEBI:57692"/>
    </ligand>
</feature>
<feature type="binding site" evidence="1">
    <location>
        <position position="53"/>
    </location>
    <ligand>
        <name>FAD</name>
        <dbReference type="ChEBI" id="CHEBI:57692"/>
    </ligand>
</feature>
<feature type="binding site" evidence="1">
    <location>
        <position position="86"/>
    </location>
    <ligand>
        <name>FAD</name>
        <dbReference type="ChEBI" id="CHEBI:57692"/>
    </ligand>
</feature>
<feature type="binding site" evidence="1">
    <location>
        <position position="143"/>
    </location>
    <ligand>
        <name>FAD</name>
        <dbReference type="ChEBI" id="CHEBI:57692"/>
    </ligand>
</feature>
<feature type="binding site" evidence="1">
    <location>
        <position position="287"/>
    </location>
    <ligand>
        <name>FAD</name>
        <dbReference type="ChEBI" id="CHEBI:57692"/>
    </ligand>
</feature>
<feature type="binding site" evidence="1">
    <location>
        <begin position="294"/>
        <end position="296"/>
    </location>
    <ligand>
        <name>FAD</name>
        <dbReference type="ChEBI" id="CHEBI:57692"/>
    </ligand>
</feature>
<feature type="disulfide bond" description="Redox-active" evidence="1">
    <location>
        <begin position="140"/>
        <end position="143"/>
    </location>
</feature>
<protein>
    <recommendedName>
        <fullName>Thioredoxin reductase</fullName>
        <ecNumber>1.8.1.9</ecNumber>
    </recommendedName>
</protein>
<comment type="catalytic activity">
    <reaction>
        <text>[thioredoxin]-dithiol + NADP(+) = [thioredoxin]-disulfide + NADPH + H(+)</text>
        <dbReference type="Rhea" id="RHEA:20345"/>
        <dbReference type="Rhea" id="RHEA-COMP:10698"/>
        <dbReference type="Rhea" id="RHEA-COMP:10700"/>
        <dbReference type="ChEBI" id="CHEBI:15378"/>
        <dbReference type="ChEBI" id="CHEBI:29950"/>
        <dbReference type="ChEBI" id="CHEBI:50058"/>
        <dbReference type="ChEBI" id="CHEBI:57783"/>
        <dbReference type="ChEBI" id="CHEBI:58349"/>
        <dbReference type="EC" id="1.8.1.9"/>
    </reaction>
</comment>
<comment type="cofactor">
    <cofactor evidence="1">
        <name>FAD</name>
        <dbReference type="ChEBI" id="CHEBI:57692"/>
    </cofactor>
    <text evidence="1">Binds 1 FAD per subunit.</text>
</comment>
<comment type="subunit">
    <text evidence="1">Homodimer.</text>
</comment>
<comment type="subcellular location">
    <subcellularLocation>
        <location evidence="1">Cytoplasm</location>
    </subcellularLocation>
</comment>
<comment type="miscellaneous">
    <text>The active site is a redox-active disulfide bond.</text>
</comment>
<comment type="similarity">
    <text evidence="2">Belongs to the class-II pyridine nucleotide-disulfide oxidoreductase family.</text>
</comment>
<sequence>MHSKVVIIGSGPAAHTAAIYLARAELKPVLYEGFMANGIAAGGQLTTTTEIENFPGFPDGIMGQELMDKMKAQSERFGTQIISETVAKVDLSARPFKYATEWSPEEYHTADSIILATGASARRLHLPGEEKYWQNGISACAVCDGAVPIFRNKHLVVIGGGDSAAEEAMYLTKYGSHVTVLVRKDKLRASSIMAHRLLNHEKVTVRFNTVGVEVKGDDKGLMSHLVVKDVTTGKEETLEANGLFYAIGHDPATALVKGQLETDADGYVVTKPGTTLTSVEGVFAAGDVQDKRYRQAITSAGTGCMAALDAEKFLSEHEETPAEHRDTSAVQGNL</sequence>
<keyword id="KW-0963">Cytoplasm</keyword>
<keyword id="KW-1015">Disulfide bond</keyword>
<keyword id="KW-0274">FAD</keyword>
<keyword id="KW-0285">Flavoprotein</keyword>
<keyword id="KW-0521">NADP</keyword>
<keyword id="KW-0560">Oxidoreductase</keyword>
<keyword id="KW-0676">Redox-active center</keyword>
<keyword id="KW-1185">Reference proteome</keyword>
<dbReference type="EC" id="1.8.1.9"/>
<dbReference type="EMBL" id="D45049">
    <property type="protein sequence ID" value="BAA08090.1"/>
    <property type="molecule type" value="Genomic_DNA"/>
</dbReference>
<dbReference type="EMBL" id="CM002236">
    <property type="protein sequence ID" value="EAA36019.1"/>
    <property type="molecule type" value="Genomic_DNA"/>
</dbReference>
<dbReference type="PIR" id="T47256">
    <property type="entry name" value="T47256"/>
</dbReference>
<dbReference type="RefSeq" id="XP_965255.1">
    <property type="nucleotide sequence ID" value="XM_960162.2"/>
</dbReference>
<dbReference type="SMR" id="P51978"/>
<dbReference type="FunCoup" id="P51978">
    <property type="interactions" value="225"/>
</dbReference>
<dbReference type="STRING" id="367110.P51978"/>
<dbReference type="PaxDb" id="5141-EFNCRP00000006415"/>
<dbReference type="EnsemblFungi" id="EAA36019">
    <property type="protein sequence ID" value="EAA36019"/>
    <property type="gene ID" value="NCU08352"/>
</dbReference>
<dbReference type="GeneID" id="3881395"/>
<dbReference type="KEGG" id="ncr:NCU08352"/>
<dbReference type="VEuPathDB" id="FungiDB:NCU08352"/>
<dbReference type="HOGENOM" id="CLU_031864_5_1_1"/>
<dbReference type="InParanoid" id="P51978"/>
<dbReference type="OMA" id="GPCHVLK"/>
<dbReference type="OrthoDB" id="371245at2759"/>
<dbReference type="Proteomes" id="UP000001805">
    <property type="component" value="Chromosome 1, Linkage Group I"/>
</dbReference>
<dbReference type="GO" id="GO:0005829">
    <property type="term" value="C:cytosol"/>
    <property type="evidence" value="ECO:0000318"/>
    <property type="project" value="GO_Central"/>
</dbReference>
<dbReference type="GO" id="GO:0004791">
    <property type="term" value="F:thioredoxin-disulfide reductase (NADPH) activity"/>
    <property type="evidence" value="ECO:0000318"/>
    <property type="project" value="GO_Central"/>
</dbReference>
<dbReference type="GO" id="GO:0045454">
    <property type="term" value="P:cell redox homeostasis"/>
    <property type="evidence" value="ECO:0000318"/>
    <property type="project" value="GO_Central"/>
</dbReference>
<dbReference type="GO" id="GO:0019430">
    <property type="term" value="P:removal of superoxide radicals"/>
    <property type="evidence" value="ECO:0007669"/>
    <property type="project" value="InterPro"/>
</dbReference>
<dbReference type="FunFam" id="3.50.50.60:FF:000064">
    <property type="entry name" value="Thioredoxin reductase"/>
    <property type="match status" value="1"/>
</dbReference>
<dbReference type="Gene3D" id="3.50.50.60">
    <property type="entry name" value="FAD/NAD(P)-binding domain"/>
    <property type="match status" value="2"/>
</dbReference>
<dbReference type="InterPro" id="IPR036188">
    <property type="entry name" value="FAD/NAD-bd_sf"/>
</dbReference>
<dbReference type="InterPro" id="IPR023753">
    <property type="entry name" value="FAD/NAD-binding_dom"/>
</dbReference>
<dbReference type="InterPro" id="IPR050097">
    <property type="entry name" value="Ferredoxin-NADP_redctase_2"/>
</dbReference>
<dbReference type="InterPro" id="IPR008255">
    <property type="entry name" value="Pyr_nucl-diS_OxRdtase_2_AS"/>
</dbReference>
<dbReference type="InterPro" id="IPR005982">
    <property type="entry name" value="Thioredox_Rdtase"/>
</dbReference>
<dbReference type="NCBIfam" id="TIGR01292">
    <property type="entry name" value="TRX_reduct"/>
    <property type="match status" value="1"/>
</dbReference>
<dbReference type="PANTHER" id="PTHR48105">
    <property type="entry name" value="THIOREDOXIN REDUCTASE 1-RELATED-RELATED"/>
    <property type="match status" value="1"/>
</dbReference>
<dbReference type="Pfam" id="PF07992">
    <property type="entry name" value="Pyr_redox_2"/>
    <property type="match status" value="1"/>
</dbReference>
<dbReference type="PRINTS" id="PR00368">
    <property type="entry name" value="FADPNR"/>
</dbReference>
<dbReference type="PRINTS" id="PR00469">
    <property type="entry name" value="PNDRDTASEII"/>
</dbReference>
<dbReference type="SUPFAM" id="SSF51905">
    <property type="entry name" value="FAD/NAD(P)-binding domain"/>
    <property type="match status" value="1"/>
</dbReference>
<dbReference type="PROSITE" id="PS00573">
    <property type="entry name" value="PYRIDINE_REDOX_2"/>
    <property type="match status" value="1"/>
</dbReference>
<organism>
    <name type="scientific">Neurospora crassa (strain ATCC 24698 / 74-OR23-1A / CBS 708.71 / DSM 1257 / FGSC 987)</name>
    <dbReference type="NCBI Taxonomy" id="367110"/>
    <lineage>
        <taxon>Eukaryota</taxon>
        <taxon>Fungi</taxon>
        <taxon>Dikarya</taxon>
        <taxon>Ascomycota</taxon>
        <taxon>Pezizomycotina</taxon>
        <taxon>Sordariomycetes</taxon>
        <taxon>Sordariomycetidae</taxon>
        <taxon>Sordariales</taxon>
        <taxon>Sordariaceae</taxon>
        <taxon>Neurospora</taxon>
    </lineage>
</organism>
<reference key="1">
    <citation type="journal article" date="1997" name="Genetics">
        <title>Mutation of the cys-9 gene, which encodes thioredoxin reductase, affects the circadian conidiation rhythm in Neurospora crassa.</title>
        <authorList>
            <person name="Onai K."/>
            <person name="Nakashima H."/>
        </authorList>
    </citation>
    <scope>NUCLEOTIDE SEQUENCE [GENOMIC DNA]</scope>
    <source>
        <strain>ACR-2</strain>
    </source>
</reference>
<reference key="2">
    <citation type="journal article" date="2003" name="Nature">
        <title>The genome sequence of the filamentous fungus Neurospora crassa.</title>
        <authorList>
            <person name="Galagan J.E."/>
            <person name="Calvo S.E."/>
            <person name="Borkovich K.A."/>
            <person name="Selker E.U."/>
            <person name="Read N.D."/>
            <person name="Jaffe D.B."/>
            <person name="FitzHugh W."/>
            <person name="Ma L.-J."/>
            <person name="Smirnov S."/>
            <person name="Purcell S."/>
            <person name="Rehman B."/>
            <person name="Elkins T."/>
            <person name="Engels R."/>
            <person name="Wang S."/>
            <person name="Nielsen C.B."/>
            <person name="Butler J."/>
            <person name="Endrizzi M."/>
            <person name="Qui D."/>
            <person name="Ianakiev P."/>
            <person name="Bell-Pedersen D."/>
            <person name="Nelson M.A."/>
            <person name="Werner-Washburne M."/>
            <person name="Selitrennikoff C.P."/>
            <person name="Kinsey J.A."/>
            <person name="Braun E.L."/>
            <person name="Zelter A."/>
            <person name="Schulte U."/>
            <person name="Kothe G.O."/>
            <person name="Jedd G."/>
            <person name="Mewes H.-W."/>
            <person name="Staben C."/>
            <person name="Marcotte E."/>
            <person name="Greenberg D."/>
            <person name="Roy A."/>
            <person name="Foley K."/>
            <person name="Naylor J."/>
            <person name="Stange-Thomann N."/>
            <person name="Barrett R."/>
            <person name="Gnerre S."/>
            <person name="Kamal M."/>
            <person name="Kamvysselis M."/>
            <person name="Mauceli E.W."/>
            <person name="Bielke C."/>
            <person name="Rudd S."/>
            <person name="Frishman D."/>
            <person name="Krystofova S."/>
            <person name="Rasmussen C."/>
            <person name="Metzenberg R.L."/>
            <person name="Perkins D.D."/>
            <person name="Kroken S."/>
            <person name="Cogoni C."/>
            <person name="Macino G."/>
            <person name="Catcheside D.E.A."/>
            <person name="Li W."/>
            <person name="Pratt R.J."/>
            <person name="Osmani S.A."/>
            <person name="DeSouza C.P.C."/>
            <person name="Glass N.L."/>
            <person name="Orbach M.J."/>
            <person name="Berglund J.A."/>
            <person name="Voelker R."/>
            <person name="Yarden O."/>
            <person name="Plamann M."/>
            <person name="Seiler S."/>
            <person name="Dunlap J.C."/>
            <person name="Radford A."/>
            <person name="Aramayo R."/>
            <person name="Natvig D.O."/>
            <person name="Alex L.A."/>
            <person name="Mannhaupt G."/>
            <person name="Ebbole D.J."/>
            <person name="Freitag M."/>
            <person name="Paulsen I."/>
            <person name="Sachs M.S."/>
            <person name="Lander E.S."/>
            <person name="Nusbaum C."/>
            <person name="Birren B.W."/>
        </authorList>
    </citation>
    <scope>NUCLEOTIDE SEQUENCE [LARGE SCALE GENOMIC DNA]</scope>
    <source>
        <strain>ATCC 24698 / 74-OR23-1A / CBS 708.71 / DSM 1257 / FGSC 987</strain>
    </source>
</reference>
<name>TRXB_NEUCR</name>
<proteinExistence type="inferred from homology"/>